<comment type="function">
    <text>Ligand for members of the frizzled family of seven transmembrane receptors. Probable developmental protein. May be a signaling molecule which affects the development of discrete regions of tissues. Is likely to signal over only few cell diameters.</text>
</comment>
<comment type="subcellular location">
    <subcellularLocation>
        <location>Secreted</location>
        <location>Extracellular space</location>
        <location>Extracellular matrix</location>
    </subcellularLocation>
</comment>
<comment type="PTM">
    <text evidence="1 3">Palmitoleoylation is required for efficient binding to frizzled receptors. Depalmitoleoylation leads to Wnt signaling pathway inhibition.</text>
</comment>
<comment type="similarity">
    <text evidence="5">Belongs to the Wnt family.</text>
</comment>
<gene>
    <name type="primary">WNT-6</name>
</gene>
<feature type="chain" id="PRO_0000200638" description="Protein Wnt-6">
    <location>
        <begin position="1" status="less than"/>
        <end position="117" status="greater than"/>
    </location>
</feature>
<feature type="lipid moiety-binding region" description="O-palmitoleoyl serine; by PORCN" evidence="3">
    <location>
        <position position="1"/>
    </location>
</feature>
<feature type="glycosylation site" description="N-linked (GlcNAc...) asparagine" evidence="4">
    <location>
        <position position="84"/>
    </location>
</feature>
<feature type="disulfide bond" evidence="2">
    <location>
        <begin position="83"/>
        <end position="98"/>
    </location>
</feature>
<feature type="non-terminal residue">
    <location>
        <position position="1"/>
    </location>
</feature>
<feature type="non-terminal residue">
    <location>
        <position position="117"/>
    </location>
</feature>
<reference key="1">
    <citation type="journal article" date="1992" name="Proc. Natl. Acad. Sci. U.S.A.">
        <title>Diversification of the Wnt gene family on the ancestral lineage of vertebrates.</title>
        <authorList>
            <person name="Sidow A."/>
        </authorList>
    </citation>
    <scope>NUCLEOTIDE SEQUENCE [GENOMIC DNA]</scope>
</reference>
<keyword id="KW-0217">Developmental protein</keyword>
<keyword id="KW-1015">Disulfide bond</keyword>
<keyword id="KW-0272">Extracellular matrix</keyword>
<keyword id="KW-0325">Glycoprotein</keyword>
<keyword id="KW-0449">Lipoprotein</keyword>
<keyword id="KW-0964">Secreted</keyword>
<keyword id="KW-0879">Wnt signaling pathway</keyword>
<proteinExistence type="inferred from homology"/>
<accession>P28091</accession>
<name>WNT6_EVATR</name>
<organism>
    <name type="scientific">Evasterias troschelii</name>
    <name type="common">Mottled sea star</name>
    <name type="synonym">Asterias troschelii</name>
    <dbReference type="NCBI Taxonomy" id="7616"/>
    <lineage>
        <taxon>Eukaryota</taxon>
        <taxon>Metazoa</taxon>
        <taxon>Echinodermata</taxon>
        <taxon>Eleutherozoa</taxon>
        <taxon>Asterozoa</taxon>
        <taxon>Asteroidea</taxon>
        <taxon>Forcipulatacea</taxon>
        <taxon>Forcipulatida</taxon>
        <taxon>Asteriidae</taxon>
        <taxon>Evasterias</taxon>
    </lineage>
</organism>
<dbReference type="EMBL" id="M91274">
    <property type="protein sequence ID" value="AAA29132.1"/>
    <property type="molecule type" value="Genomic_DNA"/>
</dbReference>
<dbReference type="SMR" id="P28091"/>
<dbReference type="GlyCosmos" id="P28091">
    <property type="glycosylation" value="1 site, No reported glycans"/>
</dbReference>
<dbReference type="GO" id="GO:0005615">
    <property type="term" value="C:extracellular space"/>
    <property type="evidence" value="ECO:0007669"/>
    <property type="project" value="TreeGrafter"/>
</dbReference>
<dbReference type="GO" id="GO:0005125">
    <property type="term" value="F:cytokine activity"/>
    <property type="evidence" value="ECO:0007669"/>
    <property type="project" value="TreeGrafter"/>
</dbReference>
<dbReference type="GO" id="GO:0005109">
    <property type="term" value="F:frizzled binding"/>
    <property type="evidence" value="ECO:0007669"/>
    <property type="project" value="TreeGrafter"/>
</dbReference>
<dbReference type="GO" id="GO:0060070">
    <property type="term" value="P:canonical Wnt signaling pathway"/>
    <property type="evidence" value="ECO:0007669"/>
    <property type="project" value="TreeGrafter"/>
</dbReference>
<dbReference type="GO" id="GO:0045165">
    <property type="term" value="P:cell fate commitment"/>
    <property type="evidence" value="ECO:0007669"/>
    <property type="project" value="TreeGrafter"/>
</dbReference>
<dbReference type="GO" id="GO:0030182">
    <property type="term" value="P:neuron differentiation"/>
    <property type="evidence" value="ECO:0007669"/>
    <property type="project" value="TreeGrafter"/>
</dbReference>
<dbReference type="InterPro" id="IPR005817">
    <property type="entry name" value="Wnt"/>
</dbReference>
<dbReference type="PANTHER" id="PTHR12027:SF72">
    <property type="entry name" value="PROTEIN WNT-6"/>
    <property type="match status" value="1"/>
</dbReference>
<dbReference type="PANTHER" id="PTHR12027">
    <property type="entry name" value="WNT RELATED"/>
    <property type="match status" value="1"/>
</dbReference>
<dbReference type="Pfam" id="PF00110">
    <property type="entry name" value="wnt"/>
    <property type="match status" value="1"/>
</dbReference>
<dbReference type="SMART" id="SM00097">
    <property type="entry name" value="WNT1"/>
    <property type="match status" value="1"/>
</dbReference>
<sequence>SGSCTLETCWEKMPSFREVGSRLMEQYKGSAKVTGGNDGGTLIPEDSTVKPPSELDLVYSMDSPDFCEPNPRTVHSARRGVGCNSTSMDVGGCDILCCGRGYVEETVIFQVNCRCRF</sequence>
<protein>
    <recommendedName>
        <fullName>Protein Wnt-6</fullName>
    </recommendedName>
</protein>
<evidence type="ECO:0000250" key="1">
    <source>
        <dbReference type="UniProtKB" id="P27467"/>
    </source>
</evidence>
<evidence type="ECO:0000250" key="2">
    <source>
        <dbReference type="UniProtKB" id="P28026"/>
    </source>
</evidence>
<evidence type="ECO:0000250" key="3">
    <source>
        <dbReference type="UniProtKB" id="P56704"/>
    </source>
</evidence>
<evidence type="ECO:0000255" key="4"/>
<evidence type="ECO:0000305" key="5"/>